<proteinExistence type="inferred from homology"/>
<dbReference type="EC" id="6.5.1.2" evidence="1"/>
<dbReference type="EMBL" id="CP000468">
    <property type="protein sequence ID" value="ABJ01818.1"/>
    <property type="molecule type" value="Genomic_DNA"/>
</dbReference>
<dbReference type="RefSeq" id="WP_000443708.1">
    <property type="nucleotide sequence ID" value="NZ_CADILS010000039.1"/>
</dbReference>
<dbReference type="SMR" id="A1ADS8"/>
<dbReference type="KEGG" id="ecv:APECO1_4135"/>
<dbReference type="HOGENOM" id="CLU_007764_2_1_6"/>
<dbReference type="Proteomes" id="UP000008216">
    <property type="component" value="Chromosome"/>
</dbReference>
<dbReference type="GO" id="GO:0005829">
    <property type="term" value="C:cytosol"/>
    <property type="evidence" value="ECO:0007669"/>
    <property type="project" value="TreeGrafter"/>
</dbReference>
<dbReference type="GO" id="GO:0003677">
    <property type="term" value="F:DNA binding"/>
    <property type="evidence" value="ECO:0007669"/>
    <property type="project" value="InterPro"/>
</dbReference>
<dbReference type="GO" id="GO:0003911">
    <property type="term" value="F:DNA ligase (NAD+) activity"/>
    <property type="evidence" value="ECO:0007669"/>
    <property type="project" value="UniProtKB-UniRule"/>
</dbReference>
<dbReference type="GO" id="GO:0046872">
    <property type="term" value="F:metal ion binding"/>
    <property type="evidence" value="ECO:0007669"/>
    <property type="project" value="UniProtKB-KW"/>
</dbReference>
<dbReference type="GO" id="GO:0006281">
    <property type="term" value="P:DNA repair"/>
    <property type="evidence" value="ECO:0007669"/>
    <property type="project" value="UniProtKB-KW"/>
</dbReference>
<dbReference type="GO" id="GO:0006260">
    <property type="term" value="P:DNA replication"/>
    <property type="evidence" value="ECO:0007669"/>
    <property type="project" value="UniProtKB-KW"/>
</dbReference>
<dbReference type="CDD" id="cd17748">
    <property type="entry name" value="BRCT_DNA_ligase_like"/>
    <property type="match status" value="1"/>
</dbReference>
<dbReference type="CDD" id="cd00114">
    <property type="entry name" value="LIGANc"/>
    <property type="match status" value="1"/>
</dbReference>
<dbReference type="FunFam" id="1.10.150.20:FF:000006">
    <property type="entry name" value="DNA ligase"/>
    <property type="match status" value="1"/>
</dbReference>
<dbReference type="FunFam" id="1.10.150.20:FF:000007">
    <property type="entry name" value="DNA ligase"/>
    <property type="match status" value="1"/>
</dbReference>
<dbReference type="FunFam" id="1.10.287.610:FF:000002">
    <property type="entry name" value="DNA ligase"/>
    <property type="match status" value="1"/>
</dbReference>
<dbReference type="FunFam" id="2.40.50.140:FF:000012">
    <property type="entry name" value="DNA ligase"/>
    <property type="match status" value="1"/>
</dbReference>
<dbReference type="FunFam" id="3.30.470.30:FF:000001">
    <property type="entry name" value="DNA ligase"/>
    <property type="match status" value="1"/>
</dbReference>
<dbReference type="FunFam" id="3.40.50.10190:FF:000004">
    <property type="entry name" value="DNA ligase"/>
    <property type="match status" value="1"/>
</dbReference>
<dbReference type="FunFam" id="6.20.10.30:FF:000001">
    <property type="entry name" value="DNA ligase"/>
    <property type="match status" value="1"/>
</dbReference>
<dbReference type="Gene3D" id="6.20.10.30">
    <property type="match status" value="1"/>
</dbReference>
<dbReference type="Gene3D" id="1.10.150.20">
    <property type="entry name" value="5' to 3' exonuclease, C-terminal subdomain"/>
    <property type="match status" value="2"/>
</dbReference>
<dbReference type="Gene3D" id="3.40.50.10190">
    <property type="entry name" value="BRCT domain"/>
    <property type="match status" value="1"/>
</dbReference>
<dbReference type="Gene3D" id="3.30.470.30">
    <property type="entry name" value="DNA ligase/mRNA capping enzyme"/>
    <property type="match status" value="1"/>
</dbReference>
<dbReference type="Gene3D" id="1.10.287.610">
    <property type="entry name" value="Helix hairpin bin"/>
    <property type="match status" value="1"/>
</dbReference>
<dbReference type="Gene3D" id="2.40.50.140">
    <property type="entry name" value="Nucleic acid-binding proteins"/>
    <property type="match status" value="1"/>
</dbReference>
<dbReference type="HAMAP" id="MF_01588">
    <property type="entry name" value="DNA_ligase_A"/>
    <property type="match status" value="1"/>
</dbReference>
<dbReference type="InterPro" id="IPR001357">
    <property type="entry name" value="BRCT_dom"/>
</dbReference>
<dbReference type="InterPro" id="IPR036420">
    <property type="entry name" value="BRCT_dom_sf"/>
</dbReference>
<dbReference type="InterPro" id="IPR041663">
    <property type="entry name" value="DisA/LigA_HHH"/>
</dbReference>
<dbReference type="InterPro" id="IPR001679">
    <property type="entry name" value="DNA_ligase"/>
</dbReference>
<dbReference type="InterPro" id="IPR018239">
    <property type="entry name" value="DNA_ligase_AS"/>
</dbReference>
<dbReference type="InterPro" id="IPR033136">
    <property type="entry name" value="DNA_ligase_CS"/>
</dbReference>
<dbReference type="InterPro" id="IPR013839">
    <property type="entry name" value="DNAligase_adenylation"/>
</dbReference>
<dbReference type="InterPro" id="IPR013840">
    <property type="entry name" value="DNAligase_N"/>
</dbReference>
<dbReference type="InterPro" id="IPR003583">
    <property type="entry name" value="Hlx-hairpin-Hlx_DNA-bd_motif"/>
</dbReference>
<dbReference type="InterPro" id="IPR012340">
    <property type="entry name" value="NA-bd_OB-fold"/>
</dbReference>
<dbReference type="InterPro" id="IPR004150">
    <property type="entry name" value="NAD_DNA_ligase_OB"/>
</dbReference>
<dbReference type="InterPro" id="IPR010994">
    <property type="entry name" value="RuvA_2-like"/>
</dbReference>
<dbReference type="InterPro" id="IPR004149">
    <property type="entry name" value="Znf_DNAligase_C4"/>
</dbReference>
<dbReference type="NCBIfam" id="TIGR00575">
    <property type="entry name" value="dnlj"/>
    <property type="match status" value="1"/>
</dbReference>
<dbReference type="NCBIfam" id="NF005932">
    <property type="entry name" value="PRK07956.1"/>
    <property type="match status" value="1"/>
</dbReference>
<dbReference type="PANTHER" id="PTHR23389">
    <property type="entry name" value="CHROMOSOME TRANSMISSION FIDELITY FACTOR 18"/>
    <property type="match status" value="1"/>
</dbReference>
<dbReference type="PANTHER" id="PTHR23389:SF9">
    <property type="entry name" value="DNA LIGASE"/>
    <property type="match status" value="1"/>
</dbReference>
<dbReference type="Pfam" id="PF00533">
    <property type="entry name" value="BRCT"/>
    <property type="match status" value="1"/>
</dbReference>
<dbReference type="Pfam" id="PF01653">
    <property type="entry name" value="DNA_ligase_aden"/>
    <property type="match status" value="1"/>
</dbReference>
<dbReference type="Pfam" id="PF03120">
    <property type="entry name" value="DNA_ligase_OB"/>
    <property type="match status" value="1"/>
</dbReference>
<dbReference type="Pfam" id="PF03119">
    <property type="entry name" value="DNA_ligase_ZBD"/>
    <property type="match status" value="1"/>
</dbReference>
<dbReference type="Pfam" id="PF12826">
    <property type="entry name" value="HHH_2"/>
    <property type="match status" value="1"/>
</dbReference>
<dbReference type="Pfam" id="PF14520">
    <property type="entry name" value="HHH_5"/>
    <property type="match status" value="1"/>
</dbReference>
<dbReference type="Pfam" id="PF22745">
    <property type="entry name" value="Nlig-Ia"/>
    <property type="match status" value="1"/>
</dbReference>
<dbReference type="PIRSF" id="PIRSF001604">
    <property type="entry name" value="LigA"/>
    <property type="match status" value="1"/>
</dbReference>
<dbReference type="SMART" id="SM00292">
    <property type="entry name" value="BRCT"/>
    <property type="match status" value="1"/>
</dbReference>
<dbReference type="SMART" id="SM00278">
    <property type="entry name" value="HhH1"/>
    <property type="match status" value="4"/>
</dbReference>
<dbReference type="SMART" id="SM00532">
    <property type="entry name" value="LIGANc"/>
    <property type="match status" value="1"/>
</dbReference>
<dbReference type="SUPFAM" id="SSF52113">
    <property type="entry name" value="BRCT domain"/>
    <property type="match status" value="1"/>
</dbReference>
<dbReference type="SUPFAM" id="SSF56091">
    <property type="entry name" value="DNA ligase/mRNA capping enzyme, catalytic domain"/>
    <property type="match status" value="1"/>
</dbReference>
<dbReference type="SUPFAM" id="SSF50249">
    <property type="entry name" value="Nucleic acid-binding proteins"/>
    <property type="match status" value="1"/>
</dbReference>
<dbReference type="SUPFAM" id="SSF47781">
    <property type="entry name" value="RuvA domain 2-like"/>
    <property type="match status" value="1"/>
</dbReference>
<dbReference type="PROSITE" id="PS50172">
    <property type="entry name" value="BRCT"/>
    <property type="match status" value="1"/>
</dbReference>
<dbReference type="PROSITE" id="PS01055">
    <property type="entry name" value="DNA_LIGASE_N1"/>
    <property type="match status" value="1"/>
</dbReference>
<dbReference type="PROSITE" id="PS01056">
    <property type="entry name" value="DNA_LIGASE_N2"/>
    <property type="match status" value="1"/>
</dbReference>
<feature type="chain" id="PRO_0000313233" description="DNA ligase">
    <location>
        <begin position="1"/>
        <end position="671"/>
    </location>
</feature>
<feature type="domain" description="BRCT" evidence="1">
    <location>
        <begin position="593"/>
        <end position="671"/>
    </location>
</feature>
<feature type="active site" description="N6-AMP-lysine intermediate" evidence="1">
    <location>
        <position position="115"/>
    </location>
</feature>
<feature type="binding site" evidence="1">
    <location>
        <begin position="32"/>
        <end position="36"/>
    </location>
    <ligand>
        <name>NAD(+)</name>
        <dbReference type="ChEBI" id="CHEBI:57540"/>
    </ligand>
</feature>
<feature type="binding site" evidence="1">
    <location>
        <begin position="81"/>
        <end position="82"/>
    </location>
    <ligand>
        <name>NAD(+)</name>
        <dbReference type="ChEBI" id="CHEBI:57540"/>
    </ligand>
</feature>
<feature type="binding site" evidence="1">
    <location>
        <position position="113"/>
    </location>
    <ligand>
        <name>NAD(+)</name>
        <dbReference type="ChEBI" id="CHEBI:57540"/>
    </ligand>
</feature>
<feature type="binding site" evidence="1">
    <location>
        <position position="136"/>
    </location>
    <ligand>
        <name>NAD(+)</name>
        <dbReference type="ChEBI" id="CHEBI:57540"/>
    </ligand>
</feature>
<feature type="binding site" evidence="1">
    <location>
        <position position="173"/>
    </location>
    <ligand>
        <name>NAD(+)</name>
        <dbReference type="ChEBI" id="CHEBI:57540"/>
    </ligand>
</feature>
<feature type="binding site" evidence="1">
    <location>
        <position position="290"/>
    </location>
    <ligand>
        <name>NAD(+)</name>
        <dbReference type="ChEBI" id="CHEBI:57540"/>
    </ligand>
</feature>
<feature type="binding site" evidence="1">
    <location>
        <position position="314"/>
    </location>
    <ligand>
        <name>NAD(+)</name>
        <dbReference type="ChEBI" id="CHEBI:57540"/>
    </ligand>
</feature>
<feature type="binding site" evidence="1">
    <location>
        <position position="408"/>
    </location>
    <ligand>
        <name>Zn(2+)</name>
        <dbReference type="ChEBI" id="CHEBI:29105"/>
    </ligand>
</feature>
<feature type="binding site" evidence="1">
    <location>
        <position position="411"/>
    </location>
    <ligand>
        <name>Zn(2+)</name>
        <dbReference type="ChEBI" id="CHEBI:29105"/>
    </ligand>
</feature>
<feature type="binding site" evidence="1">
    <location>
        <position position="426"/>
    </location>
    <ligand>
        <name>Zn(2+)</name>
        <dbReference type="ChEBI" id="CHEBI:29105"/>
    </ligand>
</feature>
<feature type="binding site" evidence="1">
    <location>
        <position position="432"/>
    </location>
    <ligand>
        <name>Zn(2+)</name>
        <dbReference type="ChEBI" id="CHEBI:29105"/>
    </ligand>
</feature>
<name>DNLJ_ECOK1</name>
<sequence length="671" mass="73614">MESIEQQLTELRTTLRHHEYLYHVMDAPEIPDAEYDRLMRELRELETKHPELITPDSPTQRVGAAPLAAFSQIRHEVPMLSLDNVFDEESFLAFNKRVQDRLKSNEKVTWCCELKLDGLAVSILYENGVLVSAATRGDGTTGEDITSNVRTIRAIPLKLHGENIPARLEVRGEVFLPQAGFEKINEDARRTGGKVFANPRNAAAGSLRQLDPRITAKRPLTFFCYGVGVLEGGELPDTHLGRLMQFKAWGLPVSDRVTLCESAEEVLAFYHKVEEDRPTLGFDIDGVVIKVNSLAQQEQLGFVARAPRWAVAFKFPAQEQMTFVRDVEFQVGRTGAITPVARLEPVHVAGVLVSNATLHNADEIERLGLRIGDKVVIRRAGDVIPQVVNVVLSERPEDTREVVFPTHCPVCGSDVERVEGEAVARCTGGLICGAQRKESLKHFVSRRAMDVDGMGDKIIDQLVEKEYVHTPADLFKLTAGKLTGLERMGPKSAQNVVNALEKAKETTFARFLYALGVREVGEATAAGLAAYFGTLEALEAASIEELQKVPDVGIVVASHVHNFFAEESNRNVISELLAEGVHWPEPIVINAEEIDSPFAGKTVVLTGSLSQMSRDDAKARLVELGAKVAGSVSKKTDLVIAGEAAGSKLAKAQELGIEVIDETEMLRLLGS</sequence>
<accession>A1ADS8</accession>
<keyword id="KW-0227">DNA damage</keyword>
<keyword id="KW-0234">DNA repair</keyword>
<keyword id="KW-0235">DNA replication</keyword>
<keyword id="KW-0436">Ligase</keyword>
<keyword id="KW-0460">Magnesium</keyword>
<keyword id="KW-0464">Manganese</keyword>
<keyword id="KW-0479">Metal-binding</keyword>
<keyword id="KW-0520">NAD</keyword>
<keyword id="KW-1185">Reference proteome</keyword>
<keyword id="KW-0862">Zinc</keyword>
<organism>
    <name type="scientific">Escherichia coli O1:K1 / APEC</name>
    <dbReference type="NCBI Taxonomy" id="405955"/>
    <lineage>
        <taxon>Bacteria</taxon>
        <taxon>Pseudomonadati</taxon>
        <taxon>Pseudomonadota</taxon>
        <taxon>Gammaproteobacteria</taxon>
        <taxon>Enterobacterales</taxon>
        <taxon>Enterobacteriaceae</taxon>
        <taxon>Escherichia</taxon>
    </lineage>
</organism>
<evidence type="ECO:0000255" key="1">
    <source>
        <dbReference type="HAMAP-Rule" id="MF_01588"/>
    </source>
</evidence>
<reference key="1">
    <citation type="journal article" date="2007" name="J. Bacteriol.">
        <title>The genome sequence of avian pathogenic Escherichia coli strain O1:K1:H7 shares strong similarities with human extraintestinal pathogenic E. coli genomes.</title>
        <authorList>
            <person name="Johnson T.J."/>
            <person name="Kariyawasam S."/>
            <person name="Wannemuehler Y."/>
            <person name="Mangiamele P."/>
            <person name="Johnson S.J."/>
            <person name="Doetkott C."/>
            <person name="Skyberg J.A."/>
            <person name="Lynne A.M."/>
            <person name="Johnson J.R."/>
            <person name="Nolan L.K."/>
        </authorList>
    </citation>
    <scope>NUCLEOTIDE SEQUENCE [LARGE SCALE GENOMIC DNA]</scope>
</reference>
<protein>
    <recommendedName>
        <fullName evidence="1">DNA ligase</fullName>
        <ecNumber evidence="1">6.5.1.2</ecNumber>
    </recommendedName>
    <alternativeName>
        <fullName evidence="1">Polydeoxyribonucleotide synthase [NAD(+)]</fullName>
    </alternativeName>
</protein>
<comment type="function">
    <text evidence="1">DNA ligase that catalyzes the formation of phosphodiester linkages between 5'-phosphoryl and 3'-hydroxyl groups in double-stranded DNA using NAD as a coenzyme and as the energy source for the reaction. It is essential for DNA replication and repair of damaged DNA.</text>
</comment>
<comment type="catalytic activity">
    <reaction evidence="1">
        <text>NAD(+) + (deoxyribonucleotide)n-3'-hydroxyl + 5'-phospho-(deoxyribonucleotide)m = (deoxyribonucleotide)n+m + AMP + beta-nicotinamide D-nucleotide.</text>
        <dbReference type="EC" id="6.5.1.2"/>
    </reaction>
</comment>
<comment type="cofactor">
    <cofactor evidence="1">
        <name>Mg(2+)</name>
        <dbReference type="ChEBI" id="CHEBI:18420"/>
    </cofactor>
    <cofactor evidence="1">
        <name>Mn(2+)</name>
        <dbReference type="ChEBI" id="CHEBI:29035"/>
    </cofactor>
</comment>
<comment type="similarity">
    <text evidence="1">Belongs to the NAD-dependent DNA ligase family. LigA subfamily.</text>
</comment>
<gene>
    <name evidence="1" type="primary">ligA</name>
    <name type="ordered locus">Ecok1_23240</name>
    <name type="ORF">APECO1_4135</name>
</gene>